<accession>Q74M64</accession>
<organism>
    <name type="scientific">Nanoarchaeum equitans (strain Kin4-M)</name>
    <dbReference type="NCBI Taxonomy" id="228908"/>
    <lineage>
        <taxon>Archaea</taxon>
        <taxon>Nanobdellota</taxon>
        <taxon>Candidatus Nanoarchaeia</taxon>
        <taxon>Nanoarchaeales</taxon>
        <taxon>Nanoarchaeaceae</taxon>
        <taxon>Nanoarchaeum</taxon>
    </lineage>
</organism>
<gene>
    <name evidence="1" type="primary">lig</name>
    <name type="ordered locus">NEQ509</name>
</gene>
<feature type="chain" id="PRO_0000365262" description="DNA ligase">
    <location>
        <begin position="1"/>
        <end position="567"/>
    </location>
</feature>
<feature type="active site" description="N6-AMP-lysine intermediate" evidence="1">
    <location>
        <position position="248"/>
    </location>
</feature>
<feature type="binding site" evidence="1">
    <location>
        <position position="246"/>
    </location>
    <ligand>
        <name>ATP</name>
        <dbReference type="ChEBI" id="CHEBI:30616"/>
    </ligand>
</feature>
<feature type="binding site" evidence="1">
    <location>
        <position position="253"/>
    </location>
    <ligand>
        <name>ATP</name>
        <dbReference type="ChEBI" id="CHEBI:30616"/>
    </ligand>
</feature>
<feature type="binding site" evidence="1">
    <location>
        <position position="268"/>
    </location>
    <ligand>
        <name>ATP</name>
        <dbReference type="ChEBI" id="CHEBI:30616"/>
    </ligand>
</feature>
<feature type="binding site" evidence="1">
    <location>
        <position position="298"/>
    </location>
    <ligand>
        <name>ATP</name>
        <dbReference type="ChEBI" id="CHEBI:30616"/>
    </ligand>
</feature>
<feature type="binding site" evidence="1">
    <location>
        <position position="339"/>
    </location>
    <ligand>
        <name>ATP</name>
        <dbReference type="ChEBI" id="CHEBI:30616"/>
    </ligand>
</feature>
<feature type="binding site" evidence="1">
    <location>
        <position position="415"/>
    </location>
    <ligand>
        <name>ATP</name>
        <dbReference type="ChEBI" id="CHEBI:30616"/>
    </ligand>
</feature>
<feature type="binding site" evidence="1">
    <location>
        <position position="421"/>
    </location>
    <ligand>
        <name>ATP</name>
        <dbReference type="ChEBI" id="CHEBI:30616"/>
    </ligand>
</feature>
<comment type="function">
    <text evidence="1">DNA ligase that seals nicks in double-stranded DNA during DNA replication, DNA recombination and DNA repair.</text>
</comment>
<comment type="catalytic activity">
    <reaction evidence="1">
        <text>ATP + (deoxyribonucleotide)n-3'-hydroxyl + 5'-phospho-(deoxyribonucleotide)m = (deoxyribonucleotide)n+m + AMP + diphosphate.</text>
        <dbReference type="EC" id="6.5.1.1"/>
    </reaction>
</comment>
<comment type="cofactor">
    <cofactor evidence="1">
        <name>Mg(2+)</name>
        <dbReference type="ChEBI" id="CHEBI:18420"/>
    </cofactor>
</comment>
<comment type="similarity">
    <text evidence="1">Belongs to the ATP-dependent DNA ligase family.</text>
</comment>
<protein>
    <recommendedName>
        <fullName evidence="1">DNA ligase</fullName>
        <ecNumber evidence="1">6.5.1.1</ecNumber>
    </recommendedName>
    <alternativeName>
        <fullName evidence="1">Polydeoxyribonucleotide synthase [ATP]</fullName>
    </alternativeName>
</protein>
<reference key="1">
    <citation type="journal article" date="2003" name="Proc. Natl. Acad. Sci. U.S.A.">
        <title>The genome of Nanoarchaeum equitans: insights into early archaeal evolution and derived parasitism.</title>
        <authorList>
            <person name="Waters E."/>
            <person name="Hohn M.J."/>
            <person name="Ahel I."/>
            <person name="Graham D.E."/>
            <person name="Adams M.D."/>
            <person name="Barnstead M."/>
            <person name="Beeson K.Y."/>
            <person name="Bibbs L."/>
            <person name="Bolanos R."/>
            <person name="Keller M."/>
            <person name="Kretz K."/>
            <person name="Lin X."/>
            <person name="Mathur E."/>
            <person name="Ni J."/>
            <person name="Podar M."/>
            <person name="Richardson T."/>
            <person name="Sutton G.G."/>
            <person name="Simon M."/>
            <person name="Soell D."/>
            <person name="Stetter K.O."/>
            <person name="Short J.M."/>
            <person name="Noorderwier M."/>
        </authorList>
    </citation>
    <scope>NUCLEOTIDE SEQUENCE [LARGE SCALE GENOMIC DNA]</scope>
    <source>
        <strain>Kin4-M</strain>
    </source>
</reference>
<evidence type="ECO:0000255" key="1">
    <source>
        <dbReference type="HAMAP-Rule" id="MF_00407"/>
    </source>
</evidence>
<sequence>MEFEKLANLFSKLETISDKTRKVQYIARFLKELKDQYKETLLLLQGTVFYPWEQKNLGIAEKGVIRAISIAYGIEKQKVEELFIKYGDLGIVAEKACEMRKQKPLLLKPLTVKDVYQTLRKIADIEGEGSQDKKIITFAKLLVNAKPKEAKYIVRLALEELRIGVGEGIIRDAIAIAFSVTPEAVEYAYSILLDFGEVVRIAKEQGEQGLWQVKLQVGRPFRVMLAIRARNVQEAFDIVGRPAMIEAKYDGFRLQIHKKGDQVWLWTRRLEDVTRQFPDVVNIVRNRVKANEIIFEAEAVGYDKKTNKFLPFQKISQRVKRKYDIEKMAKEIPVELHAFDIVYLEGEQLMKKPFKERRALLEKVIDEKEHEIQLSIGIIEKDDKKAYQFYQDCLNKGLEGVMFKNLNAPYQPGRRVGYMVKLKPTLETLDLVIVAAEWGEGKRSGWLTSFTVAALDKDTGNYLEVGEVGTGIKEKKERAEDITFEELTELLKPYIYKQEGKKVYVKPKIVVEVAYEEIQESPRYKSGFALRFPRIVRIRFDRSPKEIDTIDRIKQIYEMQRGGIHKQ</sequence>
<dbReference type="EC" id="6.5.1.1" evidence="1"/>
<dbReference type="EMBL" id="AE017199">
    <property type="protein sequence ID" value="AAR39350.1"/>
    <property type="molecule type" value="Genomic_DNA"/>
</dbReference>
<dbReference type="SMR" id="Q74M64"/>
<dbReference type="STRING" id="228908.NEQ509"/>
<dbReference type="EnsemblBacteria" id="AAR39350">
    <property type="protein sequence ID" value="AAR39350"/>
    <property type="gene ID" value="NEQ509"/>
</dbReference>
<dbReference type="KEGG" id="neq:NEQ509"/>
<dbReference type="PATRIC" id="fig|228908.8.peg.527"/>
<dbReference type="HOGENOM" id="CLU_005138_6_1_2"/>
<dbReference type="Proteomes" id="UP000000578">
    <property type="component" value="Chromosome"/>
</dbReference>
<dbReference type="GO" id="GO:0005524">
    <property type="term" value="F:ATP binding"/>
    <property type="evidence" value="ECO:0007669"/>
    <property type="project" value="UniProtKB-UniRule"/>
</dbReference>
<dbReference type="GO" id="GO:0003677">
    <property type="term" value="F:DNA binding"/>
    <property type="evidence" value="ECO:0007669"/>
    <property type="project" value="InterPro"/>
</dbReference>
<dbReference type="GO" id="GO:0003910">
    <property type="term" value="F:DNA ligase (ATP) activity"/>
    <property type="evidence" value="ECO:0007669"/>
    <property type="project" value="UniProtKB-UniRule"/>
</dbReference>
<dbReference type="GO" id="GO:0046872">
    <property type="term" value="F:metal ion binding"/>
    <property type="evidence" value="ECO:0007669"/>
    <property type="project" value="UniProtKB-KW"/>
</dbReference>
<dbReference type="GO" id="GO:0051301">
    <property type="term" value="P:cell division"/>
    <property type="evidence" value="ECO:0007669"/>
    <property type="project" value="UniProtKB-KW"/>
</dbReference>
<dbReference type="GO" id="GO:0071897">
    <property type="term" value="P:DNA biosynthetic process"/>
    <property type="evidence" value="ECO:0007669"/>
    <property type="project" value="InterPro"/>
</dbReference>
<dbReference type="GO" id="GO:0006310">
    <property type="term" value="P:DNA recombination"/>
    <property type="evidence" value="ECO:0007669"/>
    <property type="project" value="UniProtKB-UniRule"/>
</dbReference>
<dbReference type="GO" id="GO:0006281">
    <property type="term" value="P:DNA repair"/>
    <property type="evidence" value="ECO:0007669"/>
    <property type="project" value="UniProtKB-UniRule"/>
</dbReference>
<dbReference type="GO" id="GO:0006273">
    <property type="term" value="P:lagging strand elongation"/>
    <property type="evidence" value="ECO:0007669"/>
    <property type="project" value="TreeGrafter"/>
</dbReference>
<dbReference type="CDD" id="cd07901">
    <property type="entry name" value="Adenylation_DNA_ligase_Arch_LigB"/>
    <property type="match status" value="1"/>
</dbReference>
<dbReference type="CDD" id="cd07972">
    <property type="entry name" value="OBF_DNA_ligase_Arch_LigB"/>
    <property type="match status" value="1"/>
</dbReference>
<dbReference type="FunFam" id="1.10.3260.10:FF:000007">
    <property type="entry name" value="DNA ligase"/>
    <property type="match status" value="1"/>
</dbReference>
<dbReference type="Gene3D" id="1.10.3260.10">
    <property type="entry name" value="DNA ligase, ATP-dependent, N-terminal domain"/>
    <property type="match status" value="1"/>
</dbReference>
<dbReference type="Gene3D" id="3.30.470.30">
    <property type="entry name" value="DNA ligase/mRNA capping enzyme"/>
    <property type="match status" value="1"/>
</dbReference>
<dbReference type="Gene3D" id="2.40.50.140">
    <property type="entry name" value="Nucleic acid-binding proteins"/>
    <property type="match status" value="1"/>
</dbReference>
<dbReference type="HAMAP" id="MF_00407">
    <property type="entry name" value="DNA_ligase"/>
    <property type="match status" value="1"/>
</dbReference>
<dbReference type="InterPro" id="IPR050191">
    <property type="entry name" value="ATP-dep_DNA_ligase"/>
</dbReference>
<dbReference type="InterPro" id="IPR022865">
    <property type="entry name" value="DNA_ligae_ATP-dep_bac/arc"/>
</dbReference>
<dbReference type="InterPro" id="IPR000977">
    <property type="entry name" value="DNA_ligase_ATP-dep"/>
</dbReference>
<dbReference type="InterPro" id="IPR012309">
    <property type="entry name" value="DNA_ligase_ATP-dep_C"/>
</dbReference>
<dbReference type="InterPro" id="IPR012310">
    <property type="entry name" value="DNA_ligase_ATP-dep_cent"/>
</dbReference>
<dbReference type="InterPro" id="IPR012308">
    <property type="entry name" value="DNA_ligase_ATP-dep_N"/>
</dbReference>
<dbReference type="InterPro" id="IPR036599">
    <property type="entry name" value="DNA_ligase_N_sf"/>
</dbReference>
<dbReference type="InterPro" id="IPR012340">
    <property type="entry name" value="NA-bd_OB-fold"/>
</dbReference>
<dbReference type="NCBIfam" id="TIGR00574">
    <property type="entry name" value="dnl1"/>
    <property type="match status" value="1"/>
</dbReference>
<dbReference type="PANTHER" id="PTHR45674:SF7">
    <property type="entry name" value="DNA LIGASE"/>
    <property type="match status" value="1"/>
</dbReference>
<dbReference type="PANTHER" id="PTHR45674">
    <property type="entry name" value="DNA LIGASE 1/3 FAMILY MEMBER"/>
    <property type="match status" value="1"/>
</dbReference>
<dbReference type="Pfam" id="PF04679">
    <property type="entry name" value="DNA_ligase_A_C"/>
    <property type="match status" value="1"/>
</dbReference>
<dbReference type="Pfam" id="PF01068">
    <property type="entry name" value="DNA_ligase_A_M"/>
    <property type="match status" value="1"/>
</dbReference>
<dbReference type="Pfam" id="PF04675">
    <property type="entry name" value="DNA_ligase_A_N"/>
    <property type="match status" value="1"/>
</dbReference>
<dbReference type="SUPFAM" id="SSF117018">
    <property type="entry name" value="ATP-dependent DNA ligase DNA-binding domain"/>
    <property type="match status" value="1"/>
</dbReference>
<dbReference type="SUPFAM" id="SSF56091">
    <property type="entry name" value="DNA ligase/mRNA capping enzyme, catalytic domain"/>
    <property type="match status" value="1"/>
</dbReference>
<dbReference type="SUPFAM" id="SSF50249">
    <property type="entry name" value="Nucleic acid-binding proteins"/>
    <property type="match status" value="1"/>
</dbReference>
<dbReference type="PROSITE" id="PS50160">
    <property type="entry name" value="DNA_LIGASE_A3"/>
    <property type="match status" value="1"/>
</dbReference>
<proteinExistence type="inferred from homology"/>
<name>DNLI_NANEQ</name>
<keyword id="KW-0067">ATP-binding</keyword>
<keyword id="KW-0131">Cell cycle</keyword>
<keyword id="KW-0132">Cell division</keyword>
<keyword id="KW-0227">DNA damage</keyword>
<keyword id="KW-0233">DNA recombination</keyword>
<keyword id="KW-0234">DNA repair</keyword>
<keyword id="KW-0235">DNA replication</keyword>
<keyword id="KW-0436">Ligase</keyword>
<keyword id="KW-0460">Magnesium</keyword>
<keyword id="KW-0479">Metal-binding</keyword>
<keyword id="KW-0547">Nucleotide-binding</keyword>
<keyword id="KW-1185">Reference proteome</keyword>